<proteinExistence type="evidence at protein level"/>
<gene>
    <name evidence="9 13" type="primary">NGRN</name>
    <name type="synonym">FI58G</name>
    <name type="ORF">HT020</name>
</gene>
<name>NGRN_HUMAN</name>
<dbReference type="EMBL" id="AB029315">
    <property type="protein sequence ID" value="BAB21533.1"/>
    <property type="status" value="ALT_SEQ"/>
    <property type="molecule type" value="mRNA"/>
</dbReference>
<dbReference type="EMBL" id="AF242770">
    <property type="protein sequence ID" value="AAF65447.1"/>
    <property type="status" value="ALT_SEQ"/>
    <property type="molecule type" value="mRNA"/>
</dbReference>
<dbReference type="EMBL" id="AL360142">
    <property type="protein sequence ID" value="CAB96088.1"/>
    <property type="status" value="ALT_SEQ"/>
    <property type="molecule type" value="mRNA"/>
</dbReference>
<dbReference type="EMBL" id="AL834503">
    <property type="protein sequence ID" value="CAD39160.1"/>
    <property type="status" value="ALT_SEQ"/>
    <property type="molecule type" value="mRNA"/>
</dbReference>
<dbReference type="EMBL" id="AC091167">
    <property type="status" value="NOT_ANNOTATED_CDS"/>
    <property type="molecule type" value="Genomic_DNA"/>
</dbReference>
<dbReference type="EMBL" id="BC001682">
    <property type="protein sequence ID" value="AAH01682.1"/>
    <property type="status" value="ALT_SEQ"/>
    <property type="molecule type" value="mRNA"/>
</dbReference>
<dbReference type="EMBL" id="BC007222">
    <property type="protein sequence ID" value="AAH07222.1"/>
    <property type="status" value="ALT_SEQ"/>
    <property type="molecule type" value="mRNA"/>
</dbReference>
<dbReference type="EMBL" id="BC009389">
    <property type="protein sequence ID" value="AAH09389.1"/>
    <property type="status" value="ALT_SEQ"/>
    <property type="molecule type" value="mRNA"/>
</dbReference>
<dbReference type="EMBL" id="BC017192">
    <property type="protein sequence ID" value="AAH17192.1"/>
    <property type="status" value="ALT_SEQ"/>
    <property type="molecule type" value="mRNA"/>
</dbReference>
<dbReference type="EMBL" id="BC096824">
    <property type="protein sequence ID" value="AAH96824.1"/>
    <property type="molecule type" value="mRNA"/>
</dbReference>
<dbReference type="EMBL" id="BG719592">
    <property type="status" value="NOT_ANNOTATED_CDS"/>
    <property type="molecule type" value="mRNA"/>
</dbReference>
<dbReference type="EMBL" id="AF225423">
    <property type="protein sequence ID" value="AAG09725.1"/>
    <property type="status" value="ALT_SEQ"/>
    <property type="molecule type" value="mRNA"/>
</dbReference>
<dbReference type="EMBL" id="AY049780">
    <property type="protein sequence ID" value="AAL15437.1"/>
    <property type="molecule type" value="mRNA"/>
</dbReference>
<dbReference type="EMBL" id="AK312641">
    <property type="protein sequence ID" value="BAG35525.1"/>
    <property type="status" value="ALT_SEQ"/>
    <property type="molecule type" value="mRNA"/>
</dbReference>
<dbReference type="CCDS" id="CCDS32329.1">
    <molecule id="Q9NPE2-2"/>
</dbReference>
<dbReference type="PIR" id="JC7563">
    <property type="entry name" value="JC7563"/>
</dbReference>
<dbReference type="RefSeq" id="NP_001028260.2">
    <molecule id="Q9NPE2-2"/>
    <property type="nucleotide sequence ID" value="NM_001033088.3"/>
</dbReference>
<dbReference type="SMR" id="Q9NPE2"/>
<dbReference type="BioGRID" id="119482">
    <property type="interactions" value="245"/>
</dbReference>
<dbReference type="CORUM" id="Q9NPE2"/>
<dbReference type="FunCoup" id="Q9NPE2">
    <property type="interactions" value="1408"/>
</dbReference>
<dbReference type="IntAct" id="Q9NPE2">
    <property type="interactions" value="83"/>
</dbReference>
<dbReference type="MINT" id="Q9NPE2"/>
<dbReference type="STRING" id="9606.ENSP00000368389"/>
<dbReference type="GlyCosmos" id="Q9NPE2">
    <property type="glycosylation" value="3 sites, No reported glycans"/>
</dbReference>
<dbReference type="GlyGen" id="Q9NPE2">
    <property type="glycosylation" value="3 sites"/>
</dbReference>
<dbReference type="iPTMnet" id="Q9NPE2"/>
<dbReference type="PhosphoSitePlus" id="Q9NPE2"/>
<dbReference type="BioMuta" id="NGRN"/>
<dbReference type="DMDM" id="306526226"/>
<dbReference type="jPOST" id="Q9NPE2"/>
<dbReference type="MassIVE" id="Q9NPE2"/>
<dbReference type="PaxDb" id="9606-ENSP00000368389"/>
<dbReference type="PeptideAtlas" id="Q9NPE2"/>
<dbReference type="ProteomicsDB" id="81977">
    <molecule id="Q9NPE2-2"/>
</dbReference>
<dbReference type="ProteomicsDB" id="81978">
    <molecule id="Q9NPE2-3"/>
</dbReference>
<dbReference type="Pumba" id="Q9NPE2"/>
<dbReference type="Antibodypedia" id="28784">
    <property type="antibodies" value="142 antibodies from 24 providers"/>
</dbReference>
<dbReference type="DNASU" id="51335"/>
<dbReference type="Ensembl" id="ENST00000379095.5">
    <molecule id="Q9NPE2-2"/>
    <property type="protein sequence ID" value="ENSP00000368389.4"/>
    <property type="gene ID" value="ENSG00000182768.9"/>
</dbReference>
<dbReference type="GeneID" id="51335"/>
<dbReference type="KEGG" id="hsa:51335"/>
<dbReference type="MANE-Select" id="ENST00000379095.5">
    <property type="protein sequence ID" value="ENSP00000368389.4"/>
    <property type="RefSeq nucleotide sequence ID" value="NM_001033088.3"/>
    <property type="RefSeq protein sequence ID" value="NP_001028260.2"/>
</dbReference>
<dbReference type="UCSC" id="uc002bpf.2">
    <molecule id="Q9NPE2-2"/>
    <property type="organism name" value="human"/>
</dbReference>
<dbReference type="AGR" id="HGNC:18077"/>
<dbReference type="CTD" id="51335"/>
<dbReference type="DisGeNET" id="51335"/>
<dbReference type="GeneCards" id="NGRN"/>
<dbReference type="HGNC" id="HGNC:18077">
    <property type="gene designation" value="NGRN"/>
</dbReference>
<dbReference type="HPA" id="ENSG00000182768">
    <property type="expression patterns" value="Tissue enhanced (skeletal)"/>
</dbReference>
<dbReference type="MIM" id="616718">
    <property type="type" value="gene"/>
</dbReference>
<dbReference type="neXtProt" id="NX_Q9NPE2"/>
<dbReference type="OpenTargets" id="ENSG00000182768"/>
<dbReference type="PharmGKB" id="PA142671265"/>
<dbReference type="VEuPathDB" id="HostDB:ENSG00000182768"/>
<dbReference type="eggNOG" id="ENOG502S5A6">
    <property type="taxonomic scope" value="Eukaryota"/>
</dbReference>
<dbReference type="GeneTree" id="ENSGT00390000014472"/>
<dbReference type="HOGENOM" id="CLU_076903_1_0_1"/>
<dbReference type="InParanoid" id="Q9NPE2"/>
<dbReference type="OMA" id="KYHIMRR"/>
<dbReference type="OrthoDB" id="6415470at2759"/>
<dbReference type="PAN-GO" id="Q9NPE2">
    <property type="GO annotations" value="1 GO annotation based on evolutionary models"/>
</dbReference>
<dbReference type="PhylomeDB" id="Q9NPE2"/>
<dbReference type="TreeFam" id="TF324463"/>
<dbReference type="PathwayCommons" id="Q9NPE2"/>
<dbReference type="SignaLink" id="Q9NPE2"/>
<dbReference type="BioGRID-ORCS" id="51335">
    <property type="hits" value="113 hits in 1154 CRISPR screens"/>
</dbReference>
<dbReference type="ChiTaRS" id="NGRN">
    <property type="organism name" value="human"/>
</dbReference>
<dbReference type="GenomeRNAi" id="51335"/>
<dbReference type="Pharos" id="Q9NPE2">
    <property type="development level" value="Tbio"/>
</dbReference>
<dbReference type="PRO" id="PR:Q9NPE2"/>
<dbReference type="Proteomes" id="UP000005640">
    <property type="component" value="Chromosome 15"/>
</dbReference>
<dbReference type="RNAct" id="Q9NPE2">
    <property type="molecule type" value="protein"/>
</dbReference>
<dbReference type="Bgee" id="ENSG00000182768">
    <property type="expression patterns" value="Expressed in dorsolateral prefrontal cortex and 101 other cell types or tissues"/>
</dbReference>
<dbReference type="ExpressionAtlas" id="Q9NPE2">
    <property type="expression patterns" value="baseline and differential"/>
</dbReference>
<dbReference type="GO" id="GO:0005576">
    <property type="term" value="C:extracellular region"/>
    <property type="evidence" value="ECO:0007669"/>
    <property type="project" value="UniProtKB-SubCell"/>
</dbReference>
<dbReference type="GO" id="GO:0045171">
    <property type="term" value="C:intercellular bridge"/>
    <property type="evidence" value="ECO:0000314"/>
    <property type="project" value="HPA"/>
</dbReference>
<dbReference type="GO" id="GO:0005759">
    <property type="term" value="C:mitochondrial matrix"/>
    <property type="evidence" value="ECO:0000314"/>
    <property type="project" value="FlyBase"/>
</dbReference>
<dbReference type="GO" id="GO:0031966">
    <property type="term" value="C:mitochondrial membrane"/>
    <property type="evidence" value="ECO:0000314"/>
    <property type="project" value="UniProtKB"/>
</dbReference>
<dbReference type="GO" id="GO:0005739">
    <property type="term" value="C:mitochondrion"/>
    <property type="evidence" value="ECO:0000314"/>
    <property type="project" value="HPA"/>
</dbReference>
<dbReference type="GO" id="GO:0072686">
    <property type="term" value="C:mitotic spindle"/>
    <property type="evidence" value="ECO:0000314"/>
    <property type="project" value="HPA"/>
</dbReference>
<dbReference type="GO" id="GO:0016604">
    <property type="term" value="C:nuclear body"/>
    <property type="evidence" value="ECO:0000314"/>
    <property type="project" value="HPA"/>
</dbReference>
<dbReference type="GO" id="GO:0005654">
    <property type="term" value="C:nucleoplasm"/>
    <property type="evidence" value="ECO:0000314"/>
    <property type="project" value="HPA"/>
</dbReference>
<dbReference type="GO" id="GO:0005634">
    <property type="term" value="C:nucleus"/>
    <property type="evidence" value="ECO:0000318"/>
    <property type="project" value="GO_Central"/>
</dbReference>
<dbReference type="GO" id="GO:0003723">
    <property type="term" value="F:RNA binding"/>
    <property type="evidence" value="ECO:0007005"/>
    <property type="project" value="UniProtKB"/>
</dbReference>
<dbReference type="GO" id="GO:0019843">
    <property type="term" value="F:rRNA binding"/>
    <property type="evidence" value="ECO:0000314"/>
    <property type="project" value="UniProtKB"/>
</dbReference>
<dbReference type="GO" id="GO:0061668">
    <property type="term" value="P:mitochondrial ribosome assembly"/>
    <property type="evidence" value="ECO:0000315"/>
    <property type="project" value="UniProtKB"/>
</dbReference>
<dbReference type="GO" id="GO:0030182">
    <property type="term" value="P:neuron differentiation"/>
    <property type="evidence" value="ECO:0000303"/>
    <property type="project" value="UniProtKB"/>
</dbReference>
<dbReference type="GO" id="GO:0070131">
    <property type="term" value="P:positive regulation of mitochondrial translation"/>
    <property type="evidence" value="ECO:0000315"/>
    <property type="project" value="UniProtKB"/>
</dbReference>
<dbReference type="InterPro" id="IPR010487">
    <property type="entry name" value="NGRN/Rrg9"/>
</dbReference>
<dbReference type="PANTHER" id="PTHR13475">
    <property type="entry name" value="NEUGRIN"/>
    <property type="match status" value="1"/>
</dbReference>
<dbReference type="PANTHER" id="PTHR13475:SF4">
    <property type="entry name" value="NEUGRIN"/>
    <property type="match status" value="1"/>
</dbReference>
<dbReference type="Pfam" id="PF06413">
    <property type="entry name" value="Neugrin"/>
    <property type="match status" value="1"/>
</dbReference>
<feature type="signal peptide" evidence="1">
    <location>
        <begin position="1"/>
        <end position="15"/>
    </location>
</feature>
<feature type="chain" id="PRO_0000294483" description="Neugrin">
    <location>
        <begin position="16"/>
        <end position="291"/>
    </location>
</feature>
<feature type="region of interest" description="Disordered" evidence="2">
    <location>
        <begin position="26"/>
        <end position="48"/>
    </location>
</feature>
<feature type="region of interest" description="Disordered" evidence="2">
    <location>
        <begin position="155"/>
        <end position="270"/>
    </location>
</feature>
<feature type="compositionally biased region" description="Polar residues" evidence="2">
    <location>
        <begin position="236"/>
        <end position="246"/>
    </location>
</feature>
<feature type="modified residue" description="Phosphoserine" evidence="14">
    <location>
        <position position="41"/>
    </location>
</feature>
<feature type="glycosylation site" description="N-linked (GlcNAc...) asparagine" evidence="1">
    <location>
        <position position="158"/>
    </location>
</feature>
<feature type="glycosylation site" description="N-linked (GlcNAc...) asparagine" evidence="1">
    <location>
        <position position="186"/>
    </location>
</feature>
<feature type="glycosylation site" description="N-linked (GlcNAc...) asparagine" evidence="1">
    <location>
        <position position="268"/>
    </location>
</feature>
<feature type="splice variant" id="VSP_039710" description="In isoform 2." evidence="5 6 7 8 10 11">
    <original>STLKRQKQAI</original>
    <variation>RYRLLPGPSA</variation>
    <location>
        <begin position="55"/>
        <end position="64"/>
    </location>
</feature>
<feature type="splice variant" id="VSP_039711" description="In isoform 2." evidence="5 6 7 8 10 11">
    <location>
        <begin position="65"/>
        <end position="291"/>
    </location>
</feature>
<feature type="sequence variant" id="VAR_053905" description="In dbSNP:rs11073922.">
    <original>L</original>
    <variation>F</variation>
    <location>
        <position position="174"/>
    </location>
</feature>
<feature type="sequence variant" id="VAR_053906" description="In dbSNP:rs16944113.">
    <original>D</original>
    <variation>G</variation>
    <location>
        <position position="267"/>
    </location>
</feature>
<feature type="sequence conflict" description="In Ref. 2; BG719592." evidence="12" ref="2">
    <original>A</original>
    <variation>C</variation>
    <location>
        <position position="28"/>
    </location>
</feature>
<feature type="sequence conflict" description="In Ref. 7; AAG09725." evidence="12" ref="7">
    <original>P</original>
    <variation>R</variation>
    <location>
        <position position="32"/>
    </location>
</feature>
<keyword id="KW-0025">Alternative splicing</keyword>
<keyword id="KW-0217">Developmental protein</keyword>
<keyword id="KW-0221">Differentiation</keyword>
<keyword id="KW-0325">Glycoprotein</keyword>
<keyword id="KW-0472">Membrane</keyword>
<keyword id="KW-0496">Mitochondrion</keyword>
<keyword id="KW-0539">Nucleus</keyword>
<keyword id="KW-0597">Phosphoprotein</keyword>
<keyword id="KW-1267">Proteomics identification</keyword>
<keyword id="KW-1185">Reference proteome</keyword>
<keyword id="KW-0964">Secreted</keyword>
<keyword id="KW-0732">Signal</keyword>
<reference key="1">
    <citation type="journal article" date="2000" name="Biochem. Biophys. Res. Commun.">
        <title>Two novel genes, human neugrin and mouse m-neugrin, are upregulated with neuronal differentiation in neuroblastoma cells.</title>
        <authorList>
            <person name="Ishigaki S."/>
            <person name="Niwa J."/>
            <person name="Yoshihara T."/>
            <person name="Mitsuma N."/>
            <person name="Doyu M."/>
            <person name="Sobue G."/>
        </authorList>
    </citation>
    <scope>NUCLEOTIDE SEQUENCE [MRNA] (ISOFORM 2)</scope>
    <scope>SUBCELLULAR LOCATION</scope>
    <scope>TISSUE SPECIFICITY</scope>
</reference>
<reference key="2">
    <citation type="submission" date="2000-03" db="EMBL/GenBank/DDBJ databases">
        <title>cDNA DSC92 expressed by osteogenic human mesenchymal stem cells.</title>
        <authorList>
            <person name="van den Bos C."/>
            <person name="Mbalaviele G."/>
            <person name="Thiede M."/>
        </authorList>
    </citation>
    <scope>NUCLEOTIDE SEQUENCE [MRNA] (ISOFORM 2)</scope>
    <source>
        <tissue>Mesenchymal stem cell</tissue>
    </source>
</reference>
<reference key="3">
    <citation type="submission" date="2000-07" db="EMBL/GenBank/DDBJ databases">
        <authorList>
            <consortium name="The European IMAGE consortium"/>
        </authorList>
    </citation>
    <scope>NUCLEOTIDE SEQUENCE [LARGE SCALE MRNA] (ISOFORM 2)</scope>
</reference>
<reference key="4">
    <citation type="journal article" date="2007" name="BMC Genomics">
        <title>The full-ORF clone resource of the German cDNA consortium.</title>
        <authorList>
            <person name="Bechtel S."/>
            <person name="Rosenfelder H."/>
            <person name="Duda A."/>
            <person name="Schmidt C.P."/>
            <person name="Ernst U."/>
            <person name="Wellenreuther R."/>
            <person name="Mehrle A."/>
            <person name="Schuster C."/>
            <person name="Bahr A."/>
            <person name="Bloecker H."/>
            <person name="Heubner D."/>
            <person name="Hoerlein A."/>
            <person name="Michel G."/>
            <person name="Wedler H."/>
            <person name="Koehrer K."/>
            <person name="Ottenwaelder B."/>
            <person name="Poustka A."/>
            <person name="Wiemann S."/>
            <person name="Schupp I."/>
        </authorList>
    </citation>
    <scope>NUCLEOTIDE SEQUENCE [LARGE SCALE MRNA] (ISOFORM 2)</scope>
    <source>
        <tissue>Kidney</tissue>
    </source>
</reference>
<reference key="5">
    <citation type="journal article" date="2006" name="Nature">
        <title>Analysis of the DNA sequence and duplication history of human chromosome 15.</title>
        <authorList>
            <person name="Zody M.C."/>
            <person name="Garber M."/>
            <person name="Sharpe T."/>
            <person name="Young S.K."/>
            <person name="Rowen L."/>
            <person name="O'Neill K."/>
            <person name="Whittaker C.A."/>
            <person name="Kamal M."/>
            <person name="Chang J.L."/>
            <person name="Cuomo C.A."/>
            <person name="Dewar K."/>
            <person name="FitzGerald M.G."/>
            <person name="Kodira C.D."/>
            <person name="Madan A."/>
            <person name="Qin S."/>
            <person name="Yang X."/>
            <person name="Abbasi N."/>
            <person name="Abouelleil A."/>
            <person name="Arachchi H.M."/>
            <person name="Baradarani L."/>
            <person name="Birditt B."/>
            <person name="Bloom S."/>
            <person name="Bloom T."/>
            <person name="Borowsky M.L."/>
            <person name="Burke J."/>
            <person name="Butler J."/>
            <person name="Cook A."/>
            <person name="DeArellano K."/>
            <person name="DeCaprio D."/>
            <person name="Dorris L. III"/>
            <person name="Dors M."/>
            <person name="Eichler E.E."/>
            <person name="Engels R."/>
            <person name="Fahey J."/>
            <person name="Fleetwood P."/>
            <person name="Friedman C."/>
            <person name="Gearin G."/>
            <person name="Hall J.L."/>
            <person name="Hensley G."/>
            <person name="Johnson E."/>
            <person name="Jones C."/>
            <person name="Kamat A."/>
            <person name="Kaur A."/>
            <person name="Locke D.P."/>
            <person name="Madan A."/>
            <person name="Munson G."/>
            <person name="Jaffe D.B."/>
            <person name="Lui A."/>
            <person name="Macdonald P."/>
            <person name="Mauceli E."/>
            <person name="Naylor J.W."/>
            <person name="Nesbitt R."/>
            <person name="Nicol R."/>
            <person name="O'Leary S.B."/>
            <person name="Ratcliffe A."/>
            <person name="Rounsley S."/>
            <person name="She X."/>
            <person name="Sneddon K.M.B."/>
            <person name="Stewart S."/>
            <person name="Sougnez C."/>
            <person name="Stone S.M."/>
            <person name="Topham K."/>
            <person name="Vincent D."/>
            <person name="Wang S."/>
            <person name="Zimmer A.R."/>
            <person name="Birren B.W."/>
            <person name="Hood L."/>
            <person name="Lander E.S."/>
            <person name="Nusbaum C."/>
        </authorList>
    </citation>
    <scope>NUCLEOTIDE SEQUENCE [LARGE SCALE GENOMIC DNA]</scope>
</reference>
<reference key="6">
    <citation type="journal article" date="2004" name="Genome Res.">
        <title>The status, quality, and expansion of the NIH full-length cDNA project: the Mammalian Gene Collection (MGC).</title>
        <authorList>
            <consortium name="The MGC Project Team"/>
        </authorList>
    </citation>
    <scope>NUCLEOTIDE SEQUENCE [LARGE SCALE MRNA] (ISOFORMS 1 AND 2)</scope>
    <source>
        <tissue>Brain</tissue>
        <tissue>Chondrosarcoma</tissue>
        <tissue>Lung</tissue>
        <tissue>Muscle</tissue>
        <tissue>Placenta</tissue>
        <tissue>Testis</tissue>
    </source>
</reference>
<reference key="7">
    <citation type="journal article" date="2000" name="Proc. Natl. Acad. Sci. U.S.A.">
        <title>Gene expression profiling in the human hypothalamus-pituitary-adrenal axis and full-length cDNA cloning.</title>
        <authorList>
            <person name="Hu R.-M."/>
            <person name="Han Z.-G."/>
            <person name="Song H.-D."/>
            <person name="Peng Y.-D."/>
            <person name="Huang Q.-H."/>
            <person name="Ren S.-X."/>
            <person name="Gu Y.-J."/>
            <person name="Huang C.-H."/>
            <person name="Li Y.-B."/>
            <person name="Jiang C.-L."/>
            <person name="Fu G."/>
            <person name="Zhang Q.-H."/>
            <person name="Gu B.-W."/>
            <person name="Dai M."/>
            <person name="Mao Y.-F."/>
            <person name="Gao G.-F."/>
            <person name="Rong R."/>
            <person name="Ye M."/>
            <person name="Zhou J."/>
            <person name="Xu S.-H."/>
            <person name="Gu J."/>
            <person name="Shi J.-X."/>
            <person name="Jin W.-R."/>
            <person name="Zhang C.-K."/>
            <person name="Wu T.-M."/>
            <person name="Huang G.-Y."/>
            <person name="Chen Z."/>
            <person name="Chen M.-D."/>
            <person name="Chen J.-L."/>
        </authorList>
    </citation>
    <scope>NUCLEOTIDE SEQUENCE [LARGE SCALE MRNA] OF 20-291 (ISOFORM 2)</scope>
</reference>
<reference key="8">
    <citation type="submission" date="2001-07" db="EMBL/GenBank/DDBJ databases">
        <authorList>
            <person name="Hu X."/>
            <person name="Xu Y."/>
            <person name="Peng X."/>
            <person name="Yuan J."/>
            <person name="Qiang B."/>
        </authorList>
    </citation>
    <scope>NUCLEOTIDE SEQUENCE [MRNA] OF 73-291 (ISOFORM 1)</scope>
</reference>
<reference key="9">
    <citation type="journal article" date="2004" name="Nat. Genet.">
        <title>Complete sequencing and characterization of 21,243 full-length human cDNAs.</title>
        <authorList>
            <person name="Ota T."/>
            <person name="Suzuki Y."/>
            <person name="Nishikawa T."/>
            <person name="Otsuki T."/>
            <person name="Sugiyama T."/>
            <person name="Irie R."/>
            <person name="Wakamatsu A."/>
            <person name="Hayashi K."/>
            <person name="Sato H."/>
            <person name="Nagai K."/>
            <person name="Kimura K."/>
            <person name="Makita H."/>
            <person name="Sekine M."/>
            <person name="Obayashi M."/>
            <person name="Nishi T."/>
            <person name="Shibahara T."/>
            <person name="Tanaka T."/>
            <person name="Ishii S."/>
            <person name="Yamamoto J."/>
            <person name="Saito K."/>
            <person name="Kawai Y."/>
            <person name="Isono Y."/>
            <person name="Nakamura Y."/>
            <person name="Nagahari K."/>
            <person name="Murakami K."/>
            <person name="Yasuda T."/>
            <person name="Iwayanagi T."/>
            <person name="Wagatsuma M."/>
            <person name="Shiratori A."/>
            <person name="Sudo H."/>
            <person name="Hosoiri T."/>
            <person name="Kaku Y."/>
            <person name="Kodaira H."/>
            <person name="Kondo H."/>
            <person name="Sugawara M."/>
            <person name="Takahashi M."/>
            <person name="Kanda K."/>
            <person name="Yokoi T."/>
            <person name="Furuya T."/>
            <person name="Kikkawa E."/>
            <person name="Omura Y."/>
            <person name="Abe K."/>
            <person name="Kamihara K."/>
            <person name="Katsuta N."/>
            <person name="Sato K."/>
            <person name="Tanikawa M."/>
            <person name="Yamazaki M."/>
            <person name="Ninomiya K."/>
            <person name="Ishibashi T."/>
            <person name="Yamashita H."/>
            <person name="Murakawa K."/>
            <person name="Fujimori K."/>
            <person name="Tanai H."/>
            <person name="Kimata M."/>
            <person name="Watanabe M."/>
            <person name="Hiraoka S."/>
            <person name="Chiba Y."/>
            <person name="Ishida S."/>
            <person name="Ono Y."/>
            <person name="Takiguchi S."/>
            <person name="Watanabe S."/>
            <person name="Yosida M."/>
            <person name="Hotuta T."/>
            <person name="Kusano J."/>
            <person name="Kanehori K."/>
            <person name="Takahashi-Fujii A."/>
            <person name="Hara H."/>
            <person name="Tanase T.-O."/>
            <person name="Nomura Y."/>
            <person name="Togiya S."/>
            <person name="Komai F."/>
            <person name="Hara R."/>
            <person name="Takeuchi K."/>
            <person name="Arita M."/>
            <person name="Imose N."/>
            <person name="Musashino K."/>
            <person name="Yuuki H."/>
            <person name="Oshima A."/>
            <person name="Sasaki N."/>
            <person name="Aotsuka S."/>
            <person name="Yoshikawa Y."/>
            <person name="Matsunawa H."/>
            <person name="Ichihara T."/>
            <person name="Shiohata N."/>
            <person name="Sano S."/>
            <person name="Moriya S."/>
            <person name="Momiyama H."/>
            <person name="Satoh N."/>
            <person name="Takami S."/>
            <person name="Terashima Y."/>
            <person name="Suzuki O."/>
            <person name="Nakagawa S."/>
            <person name="Senoh A."/>
            <person name="Mizoguchi H."/>
            <person name="Goto Y."/>
            <person name="Shimizu F."/>
            <person name="Wakebe H."/>
            <person name="Hishigaki H."/>
            <person name="Watanabe T."/>
            <person name="Sugiyama A."/>
            <person name="Takemoto M."/>
            <person name="Kawakami B."/>
            <person name="Yamazaki M."/>
            <person name="Watanabe K."/>
            <person name="Kumagai A."/>
            <person name="Itakura S."/>
            <person name="Fukuzumi Y."/>
            <person name="Fujimori Y."/>
            <person name="Komiyama M."/>
            <person name="Tashiro H."/>
            <person name="Tanigami A."/>
            <person name="Fujiwara T."/>
            <person name="Ono T."/>
            <person name="Yamada K."/>
            <person name="Fujii Y."/>
            <person name="Ozaki K."/>
            <person name="Hirao M."/>
            <person name="Ohmori Y."/>
            <person name="Kawabata A."/>
            <person name="Hikiji T."/>
            <person name="Kobatake N."/>
            <person name="Inagaki H."/>
            <person name="Ikema Y."/>
            <person name="Okamoto S."/>
            <person name="Okitani R."/>
            <person name="Kawakami T."/>
            <person name="Noguchi S."/>
            <person name="Itoh T."/>
            <person name="Shigeta K."/>
            <person name="Senba T."/>
            <person name="Matsumura K."/>
            <person name="Nakajima Y."/>
            <person name="Mizuno T."/>
            <person name="Morinaga M."/>
            <person name="Sasaki M."/>
            <person name="Togashi T."/>
            <person name="Oyama M."/>
            <person name="Hata H."/>
            <person name="Watanabe M."/>
            <person name="Komatsu T."/>
            <person name="Mizushima-Sugano J."/>
            <person name="Satoh T."/>
            <person name="Shirai Y."/>
            <person name="Takahashi Y."/>
            <person name="Nakagawa K."/>
            <person name="Okumura K."/>
            <person name="Nagase T."/>
            <person name="Nomura N."/>
            <person name="Kikuchi H."/>
            <person name="Masuho Y."/>
            <person name="Yamashita R."/>
            <person name="Nakai K."/>
            <person name="Yada T."/>
            <person name="Nakamura Y."/>
            <person name="Ohara O."/>
            <person name="Isogai T."/>
            <person name="Sugano S."/>
        </authorList>
    </citation>
    <scope>PARTIAL NUCLEOTIDE SEQUENCE [LARGE SCALE MRNA] (ISOFORM 2)</scope>
    <source>
        <tissue>Neuroblastoma</tissue>
    </source>
</reference>
<reference key="10">
    <citation type="journal article" date="2008" name="Proc. Natl. Acad. Sci. U.S.A.">
        <title>A quantitative atlas of mitotic phosphorylation.</title>
        <authorList>
            <person name="Dephoure N."/>
            <person name="Zhou C."/>
            <person name="Villen J."/>
            <person name="Beausoleil S.A."/>
            <person name="Bakalarski C.E."/>
            <person name="Elledge S.J."/>
            <person name="Gygi S.P."/>
        </authorList>
    </citation>
    <scope>IDENTIFICATION BY MASS SPECTROMETRY [LARGE SCALE ANALYSIS]</scope>
    <source>
        <tissue>Cervix carcinoma</tissue>
    </source>
</reference>
<reference key="11">
    <citation type="journal article" date="2010" name="Sci. Signal.">
        <title>Quantitative phosphoproteomics reveals widespread full phosphorylation site occupancy during mitosis.</title>
        <authorList>
            <person name="Olsen J.V."/>
            <person name="Vermeulen M."/>
            <person name="Santamaria A."/>
            <person name="Kumar C."/>
            <person name="Miller M.L."/>
            <person name="Jensen L.J."/>
            <person name="Gnad F."/>
            <person name="Cox J."/>
            <person name="Jensen T.S."/>
            <person name="Nigg E.A."/>
            <person name="Brunak S."/>
            <person name="Mann M."/>
        </authorList>
    </citation>
    <scope>PHOSPHORYLATION [LARGE SCALE ANALYSIS] AT SER-41</scope>
    <scope>IDENTIFICATION BY MASS SPECTROMETRY [LARGE SCALE ANALYSIS]</scope>
    <source>
        <tissue>Cervix carcinoma</tissue>
    </source>
</reference>
<reference key="12">
    <citation type="journal article" date="2016" name="Cell Metab.">
        <title>A Genome-wide CRISPR Death Screen Identifies Genes Essential for Oxidative Phosphorylation.</title>
        <authorList>
            <person name="Arroyo J.D."/>
            <person name="Jourdain A.A."/>
            <person name="Calvo S.E."/>
            <person name="Ballarano C.A."/>
            <person name="Doench J.G."/>
            <person name="Root D.E."/>
            <person name="Mootha V.K."/>
        </authorList>
    </citation>
    <scope>SUBCELLULAR LOCATION</scope>
    <scope>SUBUNIT</scope>
    <scope>FUNCTION</scope>
</reference>
<organism>
    <name type="scientific">Homo sapiens</name>
    <name type="common">Human</name>
    <dbReference type="NCBI Taxonomy" id="9606"/>
    <lineage>
        <taxon>Eukaryota</taxon>
        <taxon>Metazoa</taxon>
        <taxon>Chordata</taxon>
        <taxon>Craniata</taxon>
        <taxon>Vertebrata</taxon>
        <taxon>Euteleostomi</taxon>
        <taxon>Mammalia</taxon>
        <taxon>Eutheria</taxon>
        <taxon>Euarchontoglires</taxon>
        <taxon>Primates</taxon>
        <taxon>Haplorrhini</taxon>
        <taxon>Catarrhini</taxon>
        <taxon>Hominidae</taxon>
        <taxon>Homo</taxon>
    </lineage>
</organism>
<comment type="function">
    <text evidence="4">Plays an essential role in mitochondrial ribosome biogenesis. As a component of a functional protein-RNA module, consisting of RCC1L, NGRN, RPUSD3, RPUSD4, TRUB2, FASTKD2 and 16S mitochondrial ribosomal RNA (16S mt-rRNA), controls 16S mt-rRNA abundance and is required for intra-mitochondrial translation of core subunits of the oxidative phosphorylation system.</text>
</comment>
<comment type="subunit">
    <text evidence="4">Forms a regulatory protein-RNA complex, consisting of RCC1L, NGRN, RPUSD3, RPUSD4, TRUB2, FASTKD2 and 16S mt-rRNA. Interacts with 16S mt-rRNA; this interaction is direct.</text>
</comment>
<comment type="interaction">
    <interactant intactId="EBI-2683432">
        <id>Q9NPE2</id>
    </interactant>
    <interactant intactId="EBI-6380438">
        <id>Q6ZYL4</id>
        <label>GTF2H5</label>
    </interactant>
    <organismsDiffer>false</organismsDiffer>
    <experiments>3</experiments>
</comment>
<comment type="interaction">
    <interactant intactId="EBI-2683432">
        <id>Q9NPE2</id>
    </interactant>
    <interactant intactId="EBI-2510804">
        <id>Q5VVQ6</id>
        <label>YOD1</label>
    </interactant>
    <organismsDiffer>false</organismsDiffer>
    <experiments>3</experiments>
</comment>
<comment type="subcellular location">
    <subcellularLocation>
        <location evidence="3">Nucleus</location>
    </subcellularLocation>
    <subcellularLocation>
        <location evidence="12">Secreted</location>
    </subcellularLocation>
    <subcellularLocation>
        <location evidence="4">Mitochondrion membrane</location>
    </subcellularLocation>
</comment>
<comment type="alternative products">
    <event type="alternative splicing"/>
    <isoform>
        <id>Q9NPE2-2</id>
        <name>1</name>
        <sequence type="displayed"/>
    </isoform>
    <isoform>
        <id>Q9NPE2-3</id>
        <name>2</name>
        <sequence type="described" ref="VSP_039710 VSP_039711"/>
    </isoform>
</comment>
<comment type="tissue specificity">
    <text evidence="3">Expressed at high levels in heart, brain and skeletal muscle. In brain, mainly expressed in neurons rather than glial cells.</text>
</comment>
<comment type="induction">
    <text>Highly up-regulated in neuroblastostoma cells by retinoic acid treatment inducing neurite outgrowth.</text>
</comment>
<comment type="miscellaneous">
    <molecule>Isoform 2</molecule>
    <text evidence="12">May be produced at very low levels due to a premature stop codon in the mRNA, leading to nonsense-mediated mRNA decay.</text>
</comment>
<comment type="similarity">
    <text evidence="12">Belongs to the neugrin family.</text>
</comment>
<comment type="sequence caution" evidence="12">
    <conflict type="erroneous translation">
        <sequence resource="EMBL-CDS" id="AAF65447"/>
    </conflict>
    <text>Wrong choice of CDS.</text>
</comment>
<comment type="sequence caution" evidence="12">
    <conflict type="erroneous translation">
        <sequence resource="EMBL-CDS" id="AAG09725"/>
    </conflict>
    <text>Wrong choice of CDS.</text>
</comment>
<comment type="sequence caution" evidence="12">
    <conflict type="frameshift">
        <sequence resource="EMBL-CDS" id="AAG09725"/>
    </conflict>
</comment>
<comment type="sequence caution" evidence="12">
    <conflict type="erroneous translation">
        <sequence resource="EMBL-CDS" id="AAH01682"/>
    </conflict>
    <text>Wrong choice of CDS.</text>
</comment>
<comment type="sequence caution" evidence="12">
    <conflict type="erroneous translation">
        <sequence resource="EMBL-CDS" id="AAH07222"/>
    </conflict>
    <text>Wrong choice of CDS.</text>
</comment>
<comment type="sequence caution" evidence="12">
    <conflict type="erroneous translation">
        <sequence resource="EMBL-CDS" id="AAH09389"/>
    </conflict>
    <text>Wrong choice of CDS.</text>
</comment>
<comment type="sequence caution" evidence="12">
    <conflict type="erroneous translation">
        <sequence resource="EMBL-CDS" id="AAH17192"/>
    </conflict>
    <text>Wrong choice of CDS.</text>
</comment>
<comment type="sequence caution" evidence="12">
    <conflict type="erroneous translation">
        <sequence resource="EMBL-CDS" id="BAB21533"/>
    </conflict>
    <text>Wrong choice of CDS.</text>
</comment>
<comment type="sequence caution" evidence="12">
    <conflict type="frameshift">
        <sequence resource="EMBL-CDS" id="BAB21533"/>
    </conflict>
</comment>
<comment type="sequence caution" evidence="12">
    <conflict type="erroneous translation">
        <sequence resource="EMBL-CDS" id="BAG35525"/>
    </conflict>
    <text>Wrong choice of CDS.</text>
</comment>
<comment type="sequence caution" evidence="12">
    <conflict type="miscellaneous discrepancy">
        <sequence resource="EMBL-CDS" id="BAG35525"/>
    </conflict>
    <text>N-terminus does not match isoform 2.</text>
</comment>
<comment type="sequence caution" evidence="12">
    <conflict type="erroneous translation">
        <sequence resource="EMBL-CDS" id="CAB96088"/>
    </conflict>
    <text>Wrong choice of CDS.</text>
</comment>
<comment type="sequence caution" evidence="12">
    <conflict type="erroneous translation">
        <sequence resource="EMBL-CDS" id="CAD39160"/>
    </conflict>
    <text>Wrong choice of CDS.</text>
</comment>
<protein>
    <recommendedName>
        <fullName>Neugrin</fullName>
    </recommendedName>
    <alternativeName>
        <fullName>Mesenchymal stem cell protein DSC92</fullName>
    </alternativeName>
    <alternativeName>
        <fullName>Neurite outgrowth-associated protein</fullName>
    </alternativeName>
    <alternativeName>
        <fullName>Spinal cord-derived protein FI58G</fullName>
    </alternativeName>
</protein>
<sequence>MAVTLSLLLGGRVCAAVTRCGFATRGVAGPGPIGREPDPDSDWEPEERELQEVESTLKRQKQAIRFQKIRRQMEAPGAPPRTLTWEAMEQIRYLHEEFPESWSVPRLAEGFDVSTDVIRRVLKSKFLPTLEQKLKQDQKVLKKAGLAHSLQHLRGSGNTSKLLPAGHSVSGSLLMPGHEASSKDPNHSTALKVIESDTHRTNTPRRRKGRNKEIQDLEESFVPVAAPLGHPRELQKYSSDSESPRGTGSGALPSGQKLEELKAEEPDNFSSKVVQRGREFFDSNGNFLYRI</sequence>
<accession>Q9NPE2</accession>
<accession>B2R6M8</accession>
<accession>Q4V9L7</accession>
<accession>Q9HBL4</accession>
<evidence type="ECO:0000255" key="1"/>
<evidence type="ECO:0000256" key="2">
    <source>
        <dbReference type="SAM" id="MobiDB-lite"/>
    </source>
</evidence>
<evidence type="ECO:0000269" key="3">
    <source>
    </source>
</evidence>
<evidence type="ECO:0000269" key="4">
    <source>
    </source>
</evidence>
<evidence type="ECO:0000303" key="5">
    <source>
    </source>
</evidence>
<evidence type="ECO:0000303" key="6">
    <source>
    </source>
</evidence>
<evidence type="ECO:0000303" key="7">
    <source>
    </source>
</evidence>
<evidence type="ECO:0000303" key="8">
    <source>
    </source>
</evidence>
<evidence type="ECO:0000303" key="9">
    <source>
    </source>
</evidence>
<evidence type="ECO:0000303" key="10">
    <source ref="2"/>
</evidence>
<evidence type="ECO:0000303" key="11">
    <source ref="3"/>
</evidence>
<evidence type="ECO:0000305" key="12"/>
<evidence type="ECO:0000312" key="13">
    <source>
        <dbReference type="HGNC" id="HGNC:18077"/>
    </source>
</evidence>
<evidence type="ECO:0007744" key="14">
    <source>
    </source>
</evidence>